<feature type="chain" id="PRO_0000451703" description="Alcohol acyltransferase 9">
    <location>
        <begin position="1"/>
        <end position="432"/>
    </location>
</feature>
<feature type="active site" description="Proton acceptor" evidence="1">
    <location>
        <position position="156"/>
    </location>
</feature>
<feature type="active site" description="Proton acceptor" evidence="1">
    <location>
        <position position="379"/>
    </location>
</feature>
<dbReference type="EC" id="2.3.1.268" evidence="2"/>
<dbReference type="EMBL" id="HO772635">
    <property type="status" value="NOT_ANNOTATED_CDS"/>
    <property type="molecule type" value="mRNA"/>
</dbReference>
<dbReference type="SMR" id="P0DO25"/>
<dbReference type="GO" id="GO:0016746">
    <property type="term" value="F:acyltransferase activity"/>
    <property type="evidence" value="ECO:0000314"/>
    <property type="project" value="UniProtKB"/>
</dbReference>
<dbReference type="GO" id="GO:0006066">
    <property type="term" value="P:alcohol metabolic process"/>
    <property type="evidence" value="ECO:0000314"/>
    <property type="project" value="UniProtKB"/>
</dbReference>
<dbReference type="GO" id="GO:0009836">
    <property type="term" value="P:fruit ripening, climacteric"/>
    <property type="evidence" value="ECO:0000270"/>
    <property type="project" value="UniProtKB"/>
</dbReference>
<dbReference type="GO" id="GO:0009723">
    <property type="term" value="P:response to ethylene"/>
    <property type="evidence" value="ECO:0000270"/>
    <property type="project" value="UniProtKB"/>
</dbReference>
<dbReference type="Gene3D" id="3.30.559.10">
    <property type="entry name" value="Chloramphenicol acetyltransferase-like domain"/>
    <property type="match status" value="2"/>
</dbReference>
<dbReference type="InterPro" id="IPR023213">
    <property type="entry name" value="CAT-like_dom_sf"/>
</dbReference>
<dbReference type="InterPro" id="IPR050898">
    <property type="entry name" value="Plant_acyltransferase"/>
</dbReference>
<dbReference type="PANTHER" id="PTHR31147">
    <property type="entry name" value="ACYL TRANSFERASE 4"/>
    <property type="match status" value="1"/>
</dbReference>
<dbReference type="PANTHER" id="PTHR31147:SF1">
    <property type="entry name" value="ACYL TRANSFERASE 4"/>
    <property type="match status" value="1"/>
</dbReference>
<dbReference type="Pfam" id="PF02458">
    <property type="entry name" value="Transferase"/>
    <property type="match status" value="1"/>
</dbReference>
<reference key="1">
    <citation type="submission" date="2010-10" db="EMBL/GenBank/DDBJ databases">
        <title>Plant and food research apple EST project.</title>
        <authorList>
            <person name="Beuning L."/>
            <person name="Bowen J."/>
            <person name="Crowhurst R."/>
            <person name="Gleave A."/>
            <person name="Janssen B."/>
            <person name="McArtney S."/>
            <person name="Newcomb R."/>
            <person name="Ross G."/>
            <person name="Snowden K."/>
            <person name="Walton E."/>
            <person name="Yauk Y."/>
        </authorList>
    </citation>
    <scope>NUCLEOTIDE SEQUENCE [MRNA]</scope>
    <source>
        <tissue>Fruit</tissue>
    </source>
</reference>
<reference key="2">
    <citation type="journal article" date="2011" name="Phytochemistry">
        <title>Characterisation of two alcohol acyltransferases from kiwifruit (Actinidia spp.) reveals distinct substrate preferences.</title>
        <authorList>
            <person name="Guenther C.S."/>
            <person name="Chervin C."/>
            <person name="Marsh K.B."/>
            <person name="Newcomb R.D."/>
            <person name="Souleyre E.J.F."/>
        </authorList>
    </citation>
    <scope>FUNCTION</scope>
    <scope>CATALYTIC ACTIVITY</scope>
    <scope>TISSUE SPECIFICITY</scope>
    <scope>DEVELOPMENTAL STAGE</scope>
    <scope>INDUCTION BY ETHYLENE</scope>
    <scope>GENE FAMILY</scope>
    <scope>NOMENCLATURE</scope>
</reference>
<evidence type="ECO:0000250" key="1">
    <source>
        <dbReference type="UniProtKB" id="Q9FI78"/>
    </source>
</evidence>
<evidence type="ECO:0000269" key="2">
    <source>
    </source>
</evidence>
<evidence type="ECO:0000303" key="3">
    <source>
    </source>
</evidence>
<evidence type="ECO:0000305" key="4"/>
<accession>P0DO25</accession>
<comment type="function">
    <text evidence="2">Involved in the biosynthesis of volatile esters which confer kiwifruit flavor (PubMed:21450321). Alcohol acyl transferase that can use a wide range of alcohols as substrate to produce esters (PubMed:21450321). Exhibits acetyl-CoA:alcohol O-acyltransferase activity (PubMed:21450321).</text>
</comment>
<comment type="catalytic activity">
    <reaction evidence="2">
        <text>2-(methylsulfanyl)acetyl-CoA + butan-1-ol = butyl 2-(methylsulfanyl)acetate + CoA</text>
        <dbReference type="Rhea" id="RHEA:64672"/>
        <dbReference type="ChEBI" id="CHEBI:28885"/>
        <dbReference type="ChEBI" id="CHEBI:57287"/>
        <dbReference type="ChEBI" id="CHEBI:156076"/>
        <dbReference type="ChEBI" id="CHEBI:156077"/>
    </reaction>
    <physiologicalReaction direction="left-to-right" evidence="2">
        <dbReference type="Rhea" id="RHEA:64673"/>
    </physiologicalReaction>
</comment>
<comment type="catalytic activity">
    <reaction evidence="2">
        <text>ethanol + acetyl-CoA = ethyl acetate + CoA</text>
        <dbReference type="Rhea" id="RHEA:55972"/>
        <dbReference type="ChEBI" id="CHEBI:16236"/>
        <dbReference type="ChEBI" id="CHEBI:27750"/>
        <dbReference type="ChEBI" id="CHEBI:57287"/>
        <dbReference type="ChEBI" id="CHEBI:57288"/>
        <dbReference type="EC" id="2.3.1.268"/>
    </reaction>
    <physiologicalReaction direction="left-to-right" evidence="2">
        <dbReference type="Rhea" id="RHEA:55973"/>
    </physiologicalReaction>
</comment>
<comment type="catalytic activity">
    <reaction evidence="2">
        <text>butan-1-ol + acetyl-CoA = butyl acetate + CoA</text>
        <dbReference type="Rhea" id="RHEA:64632"/>
        <dbReference type="ChEBI" id="CHEBI:28885"/>
        <dbReference type="ChEBI" id="CHEBI:31328"/>
        <dbReference type="ChEBI" id="CHEBI:57287"/>
        <dbReference type="ChEBI" id="CHEBI:57288"/>
    </reaction>
    <physiologicalReaction direction="left-to-right" evidence="2">
        <dbReference type="Rhea" id="RHEA:64633"/>
    </physiologicalReaction>
</comment>
<comment type="catalytic activity">
    <reaction evidence="2">
        <text>butan-1-ol + propanoyl-CoA = butyl propanoate + CoA</text>
        <dbReference type="Rhea" id="RHEA:64644"/>
        <dbReference type="ChEBI" id="CHEBI:28885"/>
        <dbReference type="ChEBI" id="CHEBI:57287"/>
        <dbReference type="ChEBI" id="CHEBI:57392"/>
        <dbReference type="ChEBI" id="CHEBI:89831"/>
    </reaction>
    <physiologicalReaction direction="left-to-right" evidence="2">
        <dbReference type="Rhea" id="RHEA:64645"/>
    </physiologicalReaction>
</comment>
<comment type="tissue specificity">
    <text evidence="2">Expressed in fruit.</text>
</comment>
<comment type="developmental stage">
    <text evidence="2">Accumulates in kiwifruit during ripening.</text>
</comment>
<comment type="induction">
    <text evidence="2">Induced by ethylene in ripe fruits.</text>
</comment>
<comment type="similarity">
    <text evidence="4">Belongs to the plant acyltransferase family.</text>
</comment>
<protein>
    <recommendedName>
        <fullName evidence="3">Alcohol acyltransferase 9</fullName>
        <shortName evidence="3">AdAT9</shortName>
        <ecNumber evidence="2">2.3.1.268</ecNumber>
    </recommendedName>
</protein>
<proteinExistence type="evidence at protein level"/>
<organism>
    <name type="scientific">Actinidia deliciosa</name>
    <name type="common">Kiwi</name>
    <dbReference type="NCBI Taxonomy" id="3627"/>
    <lineage>
        <taxon>Eukaryota</taxon>
        <taxon>Viridiplantae</taxon>
        <taxon>Streptophyta</taxon>
        <taxon>Embryophyta</taxon>
        <taxon>Tracheophyta</taxon>
        <taxon>Spermatophyta</taxon>
        <taxon>Magnoliopsida</taxon>
        <taxon>eudicotyledons</taxon>
        <taxon>Gunneridae</taxon>
        <taxon>Pentapetalae</taxon>
        <taxon>asterids</taxon>
        <taxon>Ericales</taxon>
        <taxon>Actinidiaceae</taxon>
        <taxon>Actinidia</taxon>
    </lineage>
</organism>
<sequence>MASSVRLVKKPVLVAPVDPTPSTVLSLSSLDSQLFLRFPIEYLLVYASPHGVDRAVTAARVKAALARSLVPYYPLAGRVKTRPDSTGLDVVCQAQGAGLLEAVSDYTASDFQRAPRSVTEWRKLLLVEVFKVVPPLVVQLTWLSDGCVALGVGFSHCVIDGIGSSEFLNLFAELATGRARLSEFQPKPVWDRHLLNSAGRTNLGTHPEFGRVPDLSGFVTRFTQERLSPTSITFDKTWLKELKNIAMSTSQPGEFPYTSFEVLSGHIWRSWARSLNLPAKQVLKLLFSINIRNRVKPSLPAGYYGNAFVLGCAQTSVKDLTEKGLGYCADLVRGAKERVGDEYAREVVESVSWPRRASPDSVGVLIISQWSRLGLDRVDFGLGRPVQVGPICCDRYCLFLPVRDRTESVKVMVAVPTSAVDRYEYFIRSPYS</sequence>
<name>AT9_ACTDE</name>
<keyword id="KW-0012">Acyltransferase</keyword>
<keyword id="KW-0808">Transferase</keyword>
<gene>
    <name evidence="3" type="primary">AT9</name>
</gene>